<reference key="1">
    <citation type="journal article" date="1995" name="Curr. Biol.">
        <title>The first characterization of a eubacterial proteasome: the 20S complex of Rhodococcus.</title>
        <authorList>
            <person name="Tamura T."/>
            <person name="Nagy I."/>
            <person name="Lupas A."/>
            <person name="Lottspeich F."/>
            <person name="Cejka Z."/>
            <person name="Schoofs G."/>
            <person name="Tanaka K."/>
            <person name="de Mot R."/>
            <person name="Baumeister W."/>
        </authorList>
    </citation>
    <scope>NUCLEOTIDE SEQUENCE [GENOMIC DNA]</scope>
    <scope>PARTIAL PROTEIN SEQUENCE</scope>
    <scope>BLOCKAGE OF N-TERMINUS</scope>
    <scope>FUNCTION</scope>
    <scope>CATALYTIC ACTIVITY</scope>
    <scope>SUBSTRATE SPECIFICITY</scope>
    <scope>SUBUNIT</scope>
    <source>
        <strain>NI86/21</strain>
    </source>
</reference>
<reference key="2">
    <citation type="journal article" date="1997" name="FEBS Lett.">
        <title>Subunit topology of the Rhodococcus proteasome.</title>
        <authorList>
            <person name="Zuhl F."/>
            <person name="Tamura T."/>
            <person name="Dolenc I."/>
            <person name="Cejka Z."/>
            <person name="Nagy I."/>
            <person name="De Mot R."/>
            <person name="Baumeister W."/>
        </authorList>
    </citation>
    <scope>SUBUNIT</scope>
    <scope>FUNCTION</scope>
    <scope>CATALYTIC ACTIVITY</scope>
    <scope>SUBSTRATE SPECIFICITY</scope>
    <scope>KINETIC PARAMETERS</scope>
    <source>
        <strain>NI86/21</strain>
    </source>
</reference>
<feature type="chain" id="PRO_0000397129" description="Proteasome subunit alpha 2">
    <location>
        <begin position="1"/>
        <end position="255"/>
    </location>
</feature>
<feature type="region of interest" description="Disordered" evidence="2">
    <location>
        <begin position="229"/>
        <end position="255"/>
    </location>
</feature>
<feature type="compositionally biased region" description="Low complexity" evidence="2">
    <location>
        <begin position="238"/>
        <end position="249"/>
    </location>
</feature>
<gene>
    <name evidence="1" type="primary">prcA2</name>
</gene>
<protein>
    <recommendedName>
        <fullName evidence="1">Proteasome subunit alpha 2</fullName>
    </recommendedName>
    <alternativeName>
        <fullName evidence="1">20S proteasome alpha subunit 2</fullName>
    </alternativeName>
    <alternativeName>
        <fullName evidence="1">Proteasome core protein PrcA 2</fullName>
    </alternativeName>
</protein>
<organism>
    <name type="scientific">Rhodococcus erythropolis</name>
    <name type="common">Arthrobacter picolinophilus</name>
    <dbReference type="NCBI Taxonomy" id="1833"/>
    <lineage>
        <taxon>Bacteria</taxon>
        <taxon>Bacillati</taxon>
        <taxon>Actinomycetota</taxon>
        <taxon>Actinomycetes</taxon>
        <taxon>Mycobacteriales</taxon>
        <taxon>Nocardiaceae</taxon>
        <taxon>Rhodococcus</taxon>
        <taxon>Rhodococcus erythropolis group</taxon>
    </lineage>
</organism>
<keyword id="KW-0963">Cytoplasm</keyword>
<keyword id="KW-0903">Direct protein sequencing</keyword>
<keyword id="KW-0647">Proteasome</keyword>
<name>PSA2_RHOER</name>
<evidence type="ECO:0000255" key="1">
    <source>
        <dbReference type="HAMAP-Rule" id="MF_00289"/>
    </source>
</evidence>
<evidence type="ECO:0000256" key="2">
    <source>
        <dbReference type="SAM" id="MobiDB-lite"/>
    </source>
</evidence>
<evidence type="ECO:0000269" key="3">
    <source>
    </source>
</evidence>
<evidence type="ECO:0000269" key="4">
    <source>
    </source>
</evidence>
<accession>Q53084</accession>
<comment type="function">
    <text evidence="1 3 4">Component of the proteasome core, a large protease complex with broad specificity involved in protein degradation. The R.erythropolis proteasomes are able to cleave oligopeptides after Tyr, Phe and Leu, very poorly after Arg but not after Glu. Thus, displays chymotrypsin-like activity, low trypsin-like activity but no caspase-like activity.</text>
</comment>
<comment type="activity regulation">
    <text evidence="1">The formation of the proteasomal ATPase ARC-20S proteasome complex, likely via the docking of the C-termini of ARC into the intersubunit pockets in the alpha-rings, may trigger opening of the gate for substrate entry. Interconversion between the open-gate and close-gate conformations leads to a dynamic regulation of the 20S proteasome proteolysis activity.</text>
</comment>
<comment type="biophysicochemical properties">
    <kinetics>
        <KM evidence="4">61.4 uM for Suc-Leu-Leu-Val-Tyr-AMC (with the beta2-alpha1 proteasome subtype)</KM>
        <KM evidence="4">66.4 uM for Suc-Leu-Leu-Val-Tyr-AMC (with the beta2-alpha2 proteasome subtype)</KM>
        <KM evidence="4">71.2 uM for Suc-Leu-Leu-Val-Tyr-AMC (with the beta1-alpha2 proteasome subtype)</KM>
        <KM evidence="4">84.3 uM for Suc-Leu-Leu-Val-Tyr-AMC (with the beta1-alpha1 proteasome subtype)</KM>
        <text>The Vmax observed with the beta2-alpha1 proteasome subtype is 2.2-fold, 1.2-fold and 4-fold higher than that with the beta2-alpha2, beta1-alpha2 and beta1-alpha1 subtypes, respectively.</text>
    </kinetics>
</comment>
<comment type="pathway">
    <text evidence="1">Protein degradation; proteasomal Pup-dependent pathway.</text>
</comment>
<comment type="subunit">
    <text evidence="3 4">The 20S proteasome core is composed of 14 alpha and 14 beta subunits that assemble into four stacked heptameric rings, resulting in a barrel-shaped structure. The two inner rings, each composed of seven catalytic beta subunits, are sandwiched by two outer rings, each composed of seven alpha subunits. All four combinations of alpha- and beta-subunits (beta2-alpha1, beta2-alpha2, beta1-alpha2 and beta1-alpha1) yield fully assembled and proteolytically active proteasomes. The catalytic chamber with the active sites is on the inside of the barrel. Has probably a gated structure, the ends of the cylinder being occluded by the N-termini of the alpha-subunits. Is likely capped by the proteasome-associated ATPase, ARC.</text>
</comment>
<comment type="subcellular location">
    <subcellularLocation>
        <location evidence="1">Cytoplasm</location>
    </subcellularLocation>
</comment>
<comment type="PTM">
    <text>The N-terminus is blocked.</text>
</comment>
<comment type="similarity">
    <text evidence="1">Belongs to the peptidase T1A family.</text>
</comment>
<proteinExistence type="evidence at protein level"/>
<sequence length="255" mass="27859">MTMPYYASAEQIMRDRSELARKGIARGRSVVVLTYRDGVLFVAENPSRALHKVSELYDRLGFAAVGKYNEFENLRRAGIVHADMRGYSYDRRDVTGRSLANAYAQTLGTIFTEQPKPYEVEICVAEIGRFGSSTPAQLYRITYDGSIADEQEFVVMGGTTEPIVTAMRESYQRDLDLESAVRLAVGALQKGGPAPAGTTEAEPRTLDVSALEVAVLDSNRPRRAFKRIAGSSLEEMLPTPAATEDAPPANGDAPS</sequence>
<dbReference type="EMBL" id="U26422">
    <property type="protein sequence ID" value="AAC45737.1"/>
    <property type="molecule type" value="Genomic_DNA"/>
</dbReference>
<dbReference type="RefSeq" id="WP_182261210.1">
    <property type="nucleotide sequence ID" value="NZ_JABBPH010000001.1"/>
</dbReference>
<dbReference type="SMR" id="Q53084"/>
<dbReference type="STRING" id="1833.XU06_14795"/>
<dbReference type="MEROPS" id="T01.980"/>
<dbReference type="UniPathway" id="UPA00997"/>
<dbReference type="GO" id="GO:0005737">
    <property type="term" value="C:cytoplasm"/>
    <property type="evidence" value="ECO:0007669"/>
    <property type="project" value="UniProtKB-SubCell"/>
</dbReference>
<dbReference type="GO" id="GO:0019773">
    <property type="term" value="C:proteasome core complex, alpha-subunit complex"/>
    <property type="evidence" value="ECO:0000314"/>
    <property type="project" value="UniProtKB"/>
</dbReference>
<dbReference type="GO" id="GO:0004175">
    <property type="term" value="F:endopeptidase activity"/>
    <property type="evidence" value="ECO:0000314"/>
    <property type="project" value="UniProtKB"/>
</dbReference>
<dbReference type="GO" id="GO:0004298">
    <property type="term" value="F:threonine-type endopeptidase activity"/>
    <property type="evidence" value="ECO:0007669"/>
    <property type="project" value="InterPro"/>
</dbReference>
<dbReference type="GO" id="GO:0019941">
    <property type="term" value="P:modification-dependent protein catabolic process"/>
    <property type="evidence" value="ECO:0007669"/>
    <property type="project" value="UniProtKB-UniRule"/>
</dbReference>
<dbReference type="GO" id="GO:0010498">
    <property type="term" value="P:proteasomal protein catabolic process"/>
    <property type="evidence" value="ECO:0000314"/>
    <property type="project" value="UniProtKB"/>
</dbReference>
<dbReference type="CDD" id="cd01901">
    <property type="entry name" value="Ntn_hydrolase"/>
    <property type="match status" value="1"/>
</dbReference>
<dbReference type="FunFam" id="3.60.20.10:FF:000023">
    <property type="entry name" value="Proteasome subunit alpha"/>
    <property type="match status" value="1"/>
</dbReference>
<dbReference type="Gene3D" id="3.60.20.10">
    <property type="entry name" value="Glutamine Phosphoribosylpyrophosphate, subunit 1, domain 1"/>
    <property type="match status" value="1"/>
</dbReference>
<dbReference type="HAMAP" id="MF_00289_B">
    <property type="entry name" value="Proteasome_A_B"/>
    <property type="match status" value="1"/>
</dbReference>
<dbReference type="InterPro" id="IPR029055">
    <property type="entry name" value="Ntn_hydrolases_N"/>
</dbReference>
<dbReference type="InterPro" id="IPR023332">
    <property type="entry name" value="Proteasome_alpha-type"/>
</dbReference>
<dbReference type="InterPro" id="IPR022296">
    <property type="entry name" value="Proteasome_asu_bac"/>
</dbReference>
<dbReference type="InterPro" id="IPR001353">
    <property type="entry name" value="Proteasome_sua/b"/>
</dbReference>
<dbReference type="NCBIfam" id="TIGR03691">
    <property type="entry name" value="20S_bact_alpha"/>
    <property type="match status" value="1"/>
</dbReference>
<dbReference type="Pfam" id="PF00227">
    <property type="entry name" value="Proteasome"/>
    <property type="match status" value="1"/>
</dbReference>
<dbReference type="SUPFAM" id="SSF56235">
    <property type="entry name" value="N-terminal nucleophile aminohydrolases (Ntn hydrolases)"/>
    <property type="match status" value="1"/>
</dbReference>
<dbReference type="PROSITE" id="PS51475">
    <property type="entry name" value="PROTEASOME_ALPHA_2"/>
    <property type="match status" value="1"/>
</dbReference>